<comment type="function">
    <text evidence="3 4 8">Ubiquitin-like protein which can be covalently attached to target lysines as a monomer. Does not seem to be involved in protein degradation and may modulate protein subcellular localization, stability or activity. Upon oxidative stress, conjugates to various anti-oxidant enzymes, chaperones, and stress defense proteins. May also conjugate to NFKBIA, TFAP2A and FOS, negatively regulating their transcriptional activity, and to NR3C1, positively regulating its transcriptional activity. Covalent attachment to its substrates requires prior activation by the E1 complex SAE1-SAE2 and linkage to the E2 enzyme UBE2I.</text>
</comment>
<comment type="subunit">
    <text evidence="9">Interacts with SAE2. Covalently attached to a number of proteins (Probable).</text>
</comment>
<comment type="tissue specificity">
    <text evidence="3 4">Expressed mainly in adult and embryonic kidney. Expressed at various levels in immune tissues, with the highest expression in the lymph node and spleen.</text>
</comment>
<comment type="PTM">
    <text>In contrast to SUMO1, SUMO2 and SUMO3, seems to be insensitive to sentrin-specific proteases due to the presence of Pro-90. This may impair processing to mature form and conjugation to substrates.</text>
</comment>
<comment type="disease" evidence="3 4 5 6 7">
    <disease id="DI-05295">
        <name>Type 1 diabetes mellitus 5</name>
        <acronym>T1D5</acronym>
        <description>A form of diabetes mellitus, a multifactorial disorder of glucose homeostasis that is characterized by susceptibility to ketoacidosis in the absence of insulin therapy. Clinical features are polydipsia, polyphagia and polyuria which result from hyperglycemia-induced osmotic diuresis and secondary thirst. These derangements result in long-term complications that affect the eyes, kidneys, nerves, and blood vessels.</description>
        <dbReference type="MIM" id="600320"/>
    </disease>
    <text evidence="3 4">Disease susceptibility may be associated with variants affecting the gene represented in this entry. Valine at position 55 results in greater NFKB1 transcriptional activity and IL12B expression and may be associated with susceptibility to insulin-dependent diabetes mellitus.</text>
</comment>
<comment type="similarity">
    <text evidence="9">Belongs to the ubiquitin family. SUMO subfamily.</text>
</comment>
<comment type="online information" name="Wikipedia">
    <link uri="https://en.wikipedia.org/wiki/SUMO_protein"/>
    <text>SUMO protein entry</text>
</comment>
<organism>
    <name type="scientific">Homo sapiens</name>
    <name type="common">Human</name>
    <dbReference type="NCBI Taxonomy" id="9606"/>
    <lineage>
        <taxon>Eukaryota</taxon>
        <taxon>Metazoa</taxon>
        <taxon>Chordata</taxon>
        <taxon>Craniata</taxon>
        <taxon>Vertebrata</taxon>
        <taxon>Euteleostomi</taxon>
        <taxon>Mammalia</taxon>
        <taxon>Eutheria</taxon>
        <taxon>Euarchontoglires</taxon>
        <taxon>Primates</taxon>
        <taxon>Haplorrhini</taxon>
        <taxon>Catarrhini</taxon>
        <taxon>Hominidae</taxon>
        <taxon>Homo</taxon>
    </lineage>
</organism>
<dbReference type="EMBL" id="AY340238">
    <property type="protein sequence ID" value="AAR04484.1"/>
    <property type="molecule type" value="mRNA"/>
</dbReference>
<dbReference type="EMBL" id="AB205057">
    <property type="protein sequence ID" value="BAH05006.1"/>
    <property type="molecule type" value="Genomic_DNA"/>
</dbReference>
<dbReference type="EMBL" id="AL031133">
    <property type="status" value="NOT_ANNOTATED_CDS"/>
    <property type="molecule type" value="Genomic_DNA"/>
</dbReference>
<dbReference type="EMBL" id="CH471051">
    <property type="protein sequence ID" value="EAW47808.1"/>
    <property type="molecule type" value="Genomic_DNA"/>
</dbReference>
<dbReference type="EMBL" id="BC130305">
    <property type="protein sequence ID" value="AAI30306.1"/>
    <property type="molecule type" value="mRNA"/>
</dbReference>
<dbReference type="CCDS" id="CCDS34549.1"/>
<dbReference type="RefSeq" id="NP_001002255.1">
    <property type="nucleotide sequence ID" value="NM_001002255.2"/>
</dbReference>
<dbReference type="SMR" id="Q6EEV6"/>
<dbReference type="BioGRID" id="132223">
    <property type="interactions" value="17"/>
</dbReference>
<dbReference type="FunCoup" id="Q6EEV6">
    <property type="interactions" value="426"/>
</dbReference>
<dbReference type="IntAct" id="Q6EEV6">
    <property type="interactions" value="3"/>
</dbReference>
<dbReference type="MINT" id="Q6EEV6"/>
<dbReference type="STRING" id="9606.ENSP00000318635"/>
<dbReference type="iPTMnet" id="Q6EEV6"/>
<dbReference type="PhosphoSitePlus" id="Q6EEV6"/>
<dbReference type="SwissPalm" id="Q6EEV6"/>
<dbReference type="BioMuta" id="SUMO4"/>
<dbReference type="DMDM" id="81175019"/>
<dbReference type="jPOST" id="Q6EEV6"/>
<dbReference type="MassIVE" id="Q6EEV6"/>
<dbReference type="PaxDb" id="9606-ENSP00000318635"/>
<dbReference type="PeptideAtlas" id="Q6EEV6"/>
<dbReference type="ProteomicsDB" id="66280"/>
<dbReference type="TopDownProteomics" id="Q6EEV6"/>
<dbReference type="ABCD" id="Q6EEV6">
    <property type="antibodies" value="1 sequenced antibody"/>
</dbReference>
<dbReference type="Antibodypedia" id="33266">
    <property type="antibodies" value="279 antibodies from 30 providers"/>
</dbReference>
<dbReference type="DNASU" id="387082"/>
<dbReference type="Ensembl" id="ENST00000326669.6">
    <property type="protein sequence ID" value="ENSP00000318635.4"/>
    <property type="gene ID" value="ENSG00000177688.7"/>
</dbReference>
<dbReference type="GeneID" id="387082"/>
<dbReference type="KEGG" id="hsa:387082"/>
<dbReference type="MANE-Select" id="ENST00000326669.6">
    <property type="protein sequence ID" value="ENSP00000318635.4"/>
    <property type="RefSeq nucleotide sequence ID" value="NM_001002255.2"/>
    <property type="RefSeq protein sequence ID" value="NP_001002255.1"/>
</dbReference>
<dbReference type="UCSC" id="uc003qml.4">
    <property type="organism name" value="human"/>
</dbReference>
<dbReference type="AGR" id="HGNC:21181"/>
<dbReference type="CTD" id="387082"/>
<dbReference type="DisGeNET" id="387082"/>
<dbReference type="GeneCards" id="SUMO4"/>
<dbReference type="HGNC" id="HGNC:21181">
    <property type="gene designation" value="SUMO4"/>
</dbReference>
<dbReference type="HPA" id="ENSG00000177688">
    <property type="expression patterns" value="Low tissue specificity"/>
</dbReference>
<dbReference type="MalaCards" id="SUMO4"/>
<dbReference type="MIM" id="600320">
    <property type="type" value="phenotype"/>
</dbReference>
<dbReference type="MIM" id="608829">
    <property type="type" value="gene"/>
</dbReference>
<dbReference type="neXtProt" id="NX_Q6EEV6"/>
<dbReference type="OpenTargets" id="ENSG00000177688"/>
<dbReference type="PharmGKB" id="PA134979206"/>
<dbReference type="VEuPathDB" id="HostDB:ENSG00000177688"/>
<dbReference type="eggNOG" id="KOG1769">
    <property type="taxonomic scope" value="Eukaryota"/>
</dbReference>
<dbReference type="GeneTree" id="ENSGT00950000182895"/>
<dbReference type="HOGENOM" id="CLU_148322_2_1_1"/>
<dbReference type="InParanoid" id="Q6EEV6"/>
<dbReference type="OMA" id="KAYCEPR"/>
<dbReference type="OrthoDB" id="10071418at2759"/>
<dbReference type="PAN-GO" id="Q6EEV6">
    <property type="GO annotations" value="4 GO annotations based on evolutionary models"/>
</dbReference>
<dbReference type="PhylomeDB" id="Q6EEV6"/>
<dbReference type="TreeFam" id="TF315116"/>
<dbReference type="PathwayCommons" id="Q6EEV6"/>
<dbReference type="SignaLink" id="Q6EEV6"/>
<dbReference type="BioGRID-ORCS" id="387082">
    <property type="hits" value="21 hits in 1118 CRISPR screens"/>
</dbReference>
<dbReference type="CD-CODE" id="B5B9A610">
    <property type="entry name" value="PML body"/>
</dbReference>
<dbReference type="GeneWiki" id="SUMO4"/>
<dbReference type="GenomeRNAi" id="387082"/>
<dbReference type="Pharos" id="Q6EEV6">
    <property type="development level" value="Tbio"/>
</dbReference>
<dbReference type="PRO" id="PR:Q6EEV6"/>
<dbReference type="Proteomes" id="UP000005640">
    <property type="component" value="Chromosome 6"/>
</dbReference>
<dbReference type="RNAct" id="Q6EEV6">
    <property type="molecule type" value="protein"/>
</dbReference>
<dbReference type="Bgee" id="ENSG00000177688">
    <property type="expression patterns" value="Expressed in oocyte and 209 other cell types or tissues"/>
</dbReference>
<dbReference type="GO" id="GO:0005634">
    <property type="term" value="C:nucleus"/>
    <property type="evidence" value="ECO:0000318"/>
    <property type="project" value="GO_Central"/>
</dbReference>
<dbReference type="GO" id="GO:0106068">
    <property type="term" value="C:SUMO ligase complex"/>
    <property type="evidence" value="ECO:0000314"/>
    <property type="project" value="UniProtKB"/>
</dbReference>
<dbReference type="GO" id="GO:0031386">
    <property type="term" value="F:protein tag activity"/>
    <property type="evidence" value="ECO:0000318"/>
    <property type="project" value="GO_Central"/>
</dbReference>
<dbReference type="GO" id="GO:0044389">
    <property type="term" value="F:ubiquitin-like protein ligase binding"/>
    <property type="evidence" value="ECO:0000318"/>
    <property type="project" value="GO_Central"/>
</dbReference>
<dbReference type="GO" id="GO:0034599">
    <property type="term" value="P:cellular response to oxidative stress"/>
    <property type="evidence" value="ECO:0000314"/>
    <property type="project" value="UniProtKB"/>
</dbReference>
<dbReference type="GO" id="GO:0043392">
    <property type="term" value="P:negative regulation of DNA binding"/>
    <property type="evidence" value="ECO:0000314"/>
    <property type="project" value="UniProtKB"/>
</dbReference>
<dbReference type="GO" id="GO:0045892">
    <property type="term" value="P:negative regulation of DNA-templated transcription"/>
    <property type="evidence" value="ECO:0000314"/>
    <property type="project" value="UniProtKB"/>
</dbReference>
<dbReference type="GO" id="GO:0043388">
    <property type="term" value="P:positive regulation of DNA binding"/>
    <property type="evidence" value="ECO:0000314"/>
    <property type="project" value="UniProtKB"/>
</dbReference>
<dbReference type="GO" id="GO:0016925">
    <property type="term" value="P:protein sumoylation"/>
    <property type="evidence" value="ECO:0000314"/>
    <property type="project" value="UniProtKB"/>
</dbReference>
<dbReference type="GO" id="GO:0043122">
    <property type="term" value="P:regulation of canonical NF-kappaB signal transduction"/>
    <property type="evidence" value="ECO:0000314"/>
    <property type="project" value="UniProtKB"/>
</dbReference>
<dbReference type="GO" id="GO:1900180">
    <property type="term" value="P:regulation of protein localization to nucleus"/>
    <property type="evidence" value="ECO:0000314"/>
    <property type="project" value="UniProtKB"/>
</dbReference>
<dbReference type="CDD" id="cd16115">
    <property type="entry name" value="Ubl_SUMO2_3_4"/>
    <property type="match status" value="1"/>
</dbReference>
<dbReference type="FunFam" id="3.10.20.90:FF:000022">
    <property type="entry name" value="Small ubiquitin-related modifier"/>
    <property type="match status" value="1"/>
</dbReference>
<dbReference type="Gene3D" id="3.10.20.90">
    <property type="entry name" value="Phosphatidylinositol 3-kinase Catalytic Subunit, Chain A, domain 1"/>
    <property type="match status" value="1"/>
</dbReference>
<dbReference type="InterPro" id="IPR022617">
    <property type="entry name" value="Rad60/SUMO-like_dom"/>
</dbReference>
<dbReference type="InterPro" id="IPR000626">
    <property type="entry name" value="Ubiquitin-like_dom"/>
</dbReference>
<dbReference type="InterPro" id="IPR029071">
    <property type="entry name" value="Ubiquitin-like_domsf"/>
</dbReference>
<dbReference type="PANTHER" id="PTHR10562">
    <property type="entry name" value="SMALL UBIQUITIN-RELATED MODIFIER"/>
    <property type="match status" value="1"/>
</dbReference>
<dbReference type="Pfam" id="PF11976">
    <property type="entry name" value="Rad60-SLD"/>
    <property type="match status" value="1"/>
</dbReference>
<dbReference type="SMART" id="SM00213">
    <property type="entry name" value="UBQ"/>
    <property type="match status" value="1"/>
</dbReference>
<dbReference type="SUPFAM" id="SSF54236">
    <property type="entry name" value="Ubiquitin-like"/>
    <property type="match status" value="1"/>
</dbReference>
<dbReference type="PROSITE" id="PS50053">
    <property type="entry name" value="UBIQUITIN_2"/>
    <property type="match status" value="1"/>
</dbReference>
<sequence>MANEKPTEEVKTENNNHINLKVAGQDGSVVQFKIKRQTPLSKLMKAYCEPRGLSVKQIRFRFGGQPISGTDKPAQLEMEDEDTIDVFQQPTGGVY</sequence>
<feature type="chain" id="PRO_0000042710" description="Small ubiquitin-related modifier 4">
    <location>
        <begin position="1"/>
        <end position="93"/>
    </location>
</feature>
<feature type="propeptide" id="PRO_0000042711" evidence="1">
    <location>
        <begin position="94"/>
        <end position="95"/>
    </location>
</feature>
<feature type="domain" description="Ubiquitin-like" evidence="2">
    <location>
        <begin position="17"/>
        <end position="95"/>
    </location>
</feature>
<feature type="cross-link" description="Glycyl lysine isopeptide (Gly-Lys) (interchain with K-? in acceptor proteins)">
    <location>
        <position position="93"/>
    </location>
</feature>
<feature type="sequence variant" id="VAR_023740" description="In dbSNP:rs237025." evidence="3 4">
    <original>V</original>
    <variation>M</variation>
    <location>
        <position position="55"/>
    </location>
</feature>
<name>SUMO4_HUMAN</name>
<keyword id="KW-0219">Diabetes mellitus</keyword>
<keyword id="KW-1017">Isopeptide bond</keyword>
<keyword id="KW-1185">Reference proteome</keyword>
<keyword id="KW-0833">Ubl conjugation pathway</keyword>
<proteinExistence type="evidence at protein level"/>
<evidence type="ECO:0000250" key="1"/>
<evidence type="ECO:0000255" key="2">
    <source>
        <dbReference type="PROSITE-ProRule" id="PRU00214"/>
    </source>
</evidence>
<evidence type="ECO:0000269" key="3">
    <source>
    </source>
</evidence>
<evidence type="ECO:0000269" key="4">
    <source>
    </source>
</evidence>
<evidence type="ECO:0000269" key="5">
    <source>
    </source>
</evidence>
<evidence type="ECO:0000269" key="6">
    <source>
    </source>
</evidence>
<evidence type="ECO:0000269" key="7">
    <source>
    </source>
</evidence>
<evidence type="ECO:0000269" key="8">
    <source>
    </source>
</evidence>
<evidence type="ECO:0000305" key="9"/>
<protein>
    <recommendedName>
        <fullName>Small ubiquitin-related modifier 4</fullName>
        <shortName>SUMO-4</shortName>
    </recommendedName>
    <alternativeName>
        <fullName>Small ubiquitin-like protein 4</fullName>
    </alternativeName>
</protein>
<reference key="1">
    <citation type="journal article" date="2004" name="J. Biol. Chem.">
        <title>A M55V polymorphism in a novel SUMO gene (SUMO-4) differentially activates heat shock transcription factors and is associated with susceptibility to type I diabetes mellitus.</title>
        <authorList>
            <person name="Bohren K.M."/>
            <person name="Nadkarni V."/>
            <person name="Song J.H."/>
            <person name="Gabbay K.H."/>
            <person name="Owerbach D."/>
        </authorList>
    </citation>
    <scope>NUCLEOTIDE SEQUENCE [MRNA]</scope>
    <scope>FUNCTION</scope>
    <scope>TISSUE SPECIFICITY</scope>
    <scope>POSSIBLE INVOLVEMENT IN T1D5</scope>
    <scope>VARIANT MET-55</scope>
</reference>
<reference key="2">
    <citation type="journal article" date="2004" name="Nat. Genet.">
        <title>A functional variant of SUMO4, a new I kappa B alpha modifier, is associated with type 1 diabetes.</title>
        <authorList>
            <person name="Guo D."/>
            <person name="Li M."/>
            <person name="Zhang Y."/>
            <person name="Yang P."/>
            <person name="Eckenrode S."/>
            <person name="Hopkins D."/>
            <person name="Zheng W."/>
            <person name="Purohit S."/>
            <person name="Podolsky R.H."/>
            <person name="Muir A."/>
            <person name="Wang J."/>
            <person name="Dong Z."/>
            <person name="Brusko T."/>
            <person name="Atkinson M."/>
            <person name="Pozzilli P."/>
            <person name="Zeidler A."/>
            <person name="Raffel L.J."/>
            <person name="Jacob C.O."/>
            <person name="Park Y."/>
            <person name="Serrano-Rios M."/>
            <person name="Martinez Larrad M.T."/>
            <person name="Zhang Z."/>
            <person name="Garchon H.-J."/>
            <person name="Bach J.-F."/>
            <person name="Rotter J.I."/>
            <person name="She J.-X."/>
            <person name="Wang C.-Y."/>
        </authorList>
    </citation>
    <scope>NUCLEOTIDE SEQUENCE [MRNA]</scope>
    <scope>FUNCTION</scope>
    <scope>TISSUE SPECIFICITY</scope>
    <scope>POSSIBLE INVOLVEMENT IN T1D5</scope>
    <scope>VARIANT MET-55</scope>
</reference>
<reference key="3">
    <citation type="journal article" date="2004" name="Nat. Genet.">
        <authorList>
            <person name="Guo D."/>
            <person name="Li M."/>
            <person name="Zhang Y."/>
            <person name="Yang P."/>
            <person name="Eckenrode S."/>
            <person name="Hopkins D."/>
            <person name="Zheng W."/>
            <person name="Purohit S."/>
            <person name="Podolsky R.H."/>
            <person name="Muir A."/>
            <person name="Wang J."/>
            <person name="Dong Z."/>
            <person name="Brusko T."/>
            <person name="Atkinson M."/>
            <person name="Pozzilli P."/>
            <person name="Zeidler A."/>
            <person name="Raffel L.J."/>
            <person name="Jacob C.O."/>
            <person name="Park Y."/>
            <person name="Serrano-Rios M."/>
            <person name="Martinez Larrad M.T."/>
            <person name="Zhang Z."/>
            <person name="Garchon H.-J."/>
            <person name="Bach J.-F."/>
            <person name="Rotter J.I."/>
            <person name="She J.-X."/>
            <person name="Wang C.-Y."/>
        </authorList>
    </citation>
    <scope>ERRATUM OF PUBMED:15247916</scope>
</reference>
<reference key="4">
    <citation type="submission" date="2005-02" db="EMBL/GenBank/DDBJ databases">
        <title>SUMO4.</title>
        <authorList>
            <person name="Noso S."/>
        </authorList>
    </citation>
    <scope>NUCLEOTIDE SEQUENCE [GENOMIC DNA]</scope>
</reference>
<reference key="5">
    <citation type="journal article" date="2003" name="Nature">
        <title>The DNA sequence and analysis of human chromosome 6.</title>
        <authorList>
            <person name="Mungall A.J."/>
            <person name="Palmer S.A."/>
            <person name="Sims S.K."/>
            <person name="Edwards C.A."/>
            <person name="Ashurst J.L."/>
            <person name="Wilming L."/>
            <person name="Jones M.C."/>
            <person name="Horton R."/>
            <person name="Hunt S.E."/>
            <person name="Scott C.E."/>
            <person name="Gilbert J.G.R."/>
            <person name="Clamp M.E."/>
            <person name="Bethel G."/>
            <person name="Milne S."/>
            <person name="Ainscough R."/>
            <person name="Almeida J.P."/>
            <person name="Ambrose K.D."/>
            <person name="Andrews T.D."/>
            <person name="Ashwell R.I.S."/>
            <person name="Babbage A.K."/>
            <person name="Bagguley C.L."/>
            <person name="Bailey J."/>
            <person name="Banerjee R."/>
            <person name="Barker D.J."/>
            <person name="Barlow K.F."/>
            <person name="Bates K."/>
            <person name="Beare D.M."/>
            <person name="Beasley H."/>
            <person name="Beasley O."/>
            <person name="Bird C.P."/>
            <person name="Blakey S.E."/>
            <person name="Bray-Allen S."/>
            <person name="Brook J."/>
            <person name="Brown A.J."/>
            <person name="Brown J.Y."/>
            <person name="Burford D.C."/>
            <person name="Burrill W."/>
            <person name="Burton J."/>
            <person name="Carder C."/>
            <person name="Carter N.P."/>
            <person name="Chapman J.C."/>
            <person name="Clark S.Y."/>
            <person name="Clark G."/>
            <person name="Clee C.M."/>
            <person name="Clegg S."/>
            <person name="Cobley V."/>
            <person name="Collier R.E."/>
            <person name="Collins J.E."/>
            <person name="Colman L.K."/>
            <person name="Corby N.R."/>
            <person name="Coville G.J."/>
            <person name="Culley K.M."/>
            <person name="Dhami P."/>
            <person name="Davies J."/>
            <person name="Dunn M."/>
            <person name="Earthrowl M.E."/>
            <person name="Ellington A.E."/>
            <person name="Evans K.A."/>
            <person name="Faulkner L."/>
            <person name="Francis M.D."/>
            <person name="Frankish A."/>
            <person name="Frankland J."/>
            <person name="French L."/>
            <person name="Garner P."/>
            <person name="Garnett J."/>
            <person name="Ghori M.J."/>
            <person name="Gilby L.M."/>
            <person name="Gillson C.J."/>
            <person name="Glithero R.J."/>
            <person name="Grafham D.V."/>
            <person name="Grant M."/>
            <person name="Gribble S."/>
            <person name="Griffiths C."/>
            <person name="Griffiths M.N.D."/>
            <person name="Hall R."/>
            <person name="Halls K.S."/>
            <person name="Hammond S."/>
            <person name="Harley J.L."/>
            <person name="Hart E.A."/>
            <person name="Heath P.D."/>
            <person name="Heathcott R."/>
            <person name="Holmes S.J."/>
            <person name="Howden P.J."/>
            <person name="Howe K.L."/>
            <person name="Howell G.R."/>
            <person name="Huckle E."/>
            <person name="Humphray S.J."/>
            <person name="Humphries M.D."/>
            <person name="Hunt A.R."/>
            <person name="Johnson C.M."/>
            <person name="Joy A.A."/>
            <person name="Kay M."/>
            <person name="Keenan S.J."/>
            <person name="Kimberley A.M."/>
            <person name="King A."/>
            <person name="Laird G.K."/>
            <person name="Langford C."/>
            <person name="Lawlor S."/>
            <person name="Leongamornlert D.A."/>
            <person name="Leversha M."/>
            <person name="Lloyd C.R."/>
            <person name="Lloyd D.M."/>
            <person name="Loveland J.E."/>
            <person name="Lovell J."/>
            <person name="Martin S."/>
            <person name="Mashreghi-Mohammadi M."/>
            <person name="Maslen G.L."/>
            <person name="Matthews L."/>
            <person name="McCann O.T."/>
            <person name="McLaren S.J."/>
            <person name="McLay K."/>
            <person name="McMurray A."/>
            <person name="Moore M.J.F."/>
            <person name="Mullikin J.C."/>
            <person name="Niblett D."/>
            <person name="Nickerson T."/>
            <person name="Novik K.L."/>
            <person name="Oliver K."/>
            <person name="Overton-Larty E.K."/>
            <person name="Parker A."/>
            <person name="Patel R."/>
            <person name="Pearce A.V."/>
            <person name="Peck A.I."/>
            <person name="Phillimore B.J.C.T."/>
            <person name="Phillips S."/>
            <person name="Plumb R.W."/>
            <person name="Porter K.M."/>
            <person name="Ramsey Y."/>
            <person name="Ranby S.A."/>
            <person name="Rice C.M."/>
            <person name="Ross M.T."/>
            <person name="Searle S.M."/>
            <person name="Sehra H.K."/>
            <person name="Sheridan E."/>
            <person name="Skuce C.D."/>
            <person name="Smith S."/>
            <person name="Smith M."/>
            <person name="Spraggon L."/>
            <person name="Squares S.L."/>
            <person name="Steward C.A."/>
            <person name="Sycamore N."/>
            <person name="Tamlyn-Hall G."/>
            <person name="Tester J."/>
            <person name="Theaker A.J."/>
            <person name="Thomas D.W."/>
            <person name="Thorpe A."/>
            <person name="Tracey A."/>
            <person name="Tromans A."/>
            <person name="Tubby B."/>
            <person name="Wall M."/>
            <person name="Wallis J.M."/>
            <person name="West A.P."/>
            <person name="White S.S."/>
            <person name="Whitehead S.L."/>
            <person name="Whittaker H."/>
            <person name="Wild A."/>
            <person name="Willey D.J."/>
            <person name="Wilmer T.E."/>
            <person name="Wood J.M."/>
            <person name="Wray P.W."/>
            <person name="Wyatt J.C."/>
            <person name="Young L."/>
            <person name="Younger R.M."/>
            <person name="Bentley D.R."/>
            <person name="Coulson A."/>
            <person name="Durbin R.M."/>
            <person name="Hubbard T."/>
            <person name="Sulston J.E."/>
            <person name="Dunham I."/>
            <person name="Rogers J."/>
            <person name="Beck S."/>
        </authorList>
    </citation>
    <scope>NUCLEOTIDE SEQUENCE [LARGE SCALE GENOMIC DNA]</scope>
</reference>
<reference key="6">
    <citation type="submission" date="2005-09" db="EMBL/GenBank/DDBJ databases">
        <authorList>
            <person name="Mural R.J."/>
            <person name="Istrail S."/>
            <person name="Sutton G.G."/>
            <person name="Florea L."/>
            <person name="Halpern A.L."/>
            <person name="Mobarry C.M."/>
            <person name="Lippert R."/>
            <person name="Walenz B."/>
            <person name="Shatkay H."/>
            <person name="Dew I."/>
            <person name="Miller J.R."/>
            <person name="Flanigan M.J."/>
            <person name="Edwards N.J."/>
            <person name="Bolanos R."/>
            <person name="Fasulo D."/>
            <person name="Halldorsson B.V."/>
            <person name="Hannenhalli S."/>
            <person name="Turner R."/>
            <person name="Yooseph S."/>
            <person name="Lu F."/>
            <person name="Nusskern D.R."/>
            <person name="Shue B.C."/>
            <person name="Zheng X.H."/>
            <person name="Zhong F."/>
            <person name="Delcher A.L."/>
            <person name="Huson D.H."/>
            <person name="Kravitz S.A."/>
            <person name="Mouchard L."/>
            <person name="Reinert K."/>
            <person name="Remington K.A."/>
            <person name="Clark A.G."/>
            <person name="Waterman M.S."/>
            <person name="Eichler E.E."/>
            <person name="Adams M.D."/>
            <person name="Hunkapiller M.W."/>
            <person name="Myers E.W."/>
            <person name="Venter J.C."/>
        </authorList>
    </citation>
    <scope>NUCLEOTIDE SEQUENCE [LARGE SCALE GENOMIC DNA]</scope>
</reference>
<reference key="7">
    <citation type="journal article" date="2004" name="Genome Res.">
        <title>The status, quality, and expansion of the NIH full-length cDNA project: the Mammalian Gene Collection (MGC).</title>
        <authorList>
            <consortium name="The MGC Project Team"/>
        </authorList>
    </citation>
    <scope>NUCLEOTIDE SEQUENCE [LARGE SCALE MRNA]</scope>
</reference>
<reference key="8">
    <citation type="journal article" date="2005" name="Biochem. Biophys. Res. Commun.">
        <title>A proline-90 residue unique to SUMO-4 prevents maturation and sumoylation.</title>
        <authorList>
            <person name="Owerbach D."/>
            <person name="McKay E.M."/>
            <person name="Yeh E.T.H."/>
            <person name="Gabbay K.H."/>
            <person name="Bohren K.M."/>
        </authorList>
    </citation>
    <scope>LACK OF PROTEOLYTIC CLEAVAGE</scope>
</reference>
<reference key="9">
    <citation type="journal article" date="2005" name="Biochem. Biophys. Res. Commun.">
        <title>Proteomic analysis of SUMO4 substrates in HEK293 cells under serum starvation-induced stress.</title>
        <authorList>
            <person name="Guo D."/>
            <person name="Han J."/>
            <person name="Adam B.-L."/>
            <person name="Colburn N.H."/>
            <person name="Wang M.-H."/>
            <person name="Dong Z."/>
            <person name="Eizirik D.L."/>
            <person name="She J.-X."/>
            <person name="Wang C.-Y."/>
        </authorList>
    </citation>
    <scope>FUNCTION</scope>
</reference>
<reference key="10">
    <citation type="journal article" date="2005" name="Nat. Genet.">
        <title>Assessing the validity of the association between the SUMO4 M55V variant and risk of type 1 diabetes.</title>
        <authorList>
            <person name="Smyth D.J."/>
            <person name="Howson J.M.M."/>
            <person name="Lowe C.E."/>
            <person name="Walker N.M."/>
            <person name="Lam A.C."/>
            <person name="Nutland S."/>
            <person name="Hutchings J."/>
            <person name="Tuomilehto-Wolf E."/>
            <person name="Tuomilehto J."/>
            <person name="Guja C."/>
            <person name="Ionescu-Tirgoviste C."/>
            <person name="Undlien D.E."/>
            <person name="Roenningen K.S."/>
            <person name="Savage D."/>
            <person name="Dunger D.B."/>
            <person name="Twells R.C.J."/>
            <person name="McArdle W.L."/>
            <person name="Strachan D.P."/>
            <person name="Todd J.A."/>
        </authorList>
    </citation>
    <scope>POSSIBLE INVOLVEMENT IN T1D5</scope>
</reference>
<reference key="11">
    <citation type="journal article" date="2004" name="Nat. Genet.">
        <authorList>
            <person name="Smyth D.J."/>
            <person name="Howson J.M.M."/>
            <person name="Lowe C.E."/>
            <person name="Walker N.M."/>
            <person name="Lam A.C."/>
            <person name="Nutland S."/>
            <person name="Hutchings J."/>
            <person name="Tuomilehto-Wolf E."/>
            <person name="Tuomilehto J."/>
            <person name="Guja C."/>
            <person name="Ionescu-Tirgoviste C."/>
            <person name="Undlien D.E."/>
            <person name="Roenningen K.S."/>
            <person name="Savage D."/>
            <person name="Dunger D.B."/>
            <person name="Twells R.C.J."/>
            <person name="McArdle W.L."/>
            <person name="Strachan D.P."/>
            <person name="Todd J.A."/>
        </authorList>
    </citation>
    <scope>ERRATUM OF PUBMED:15678134</scope>
</reference>
<reference key="12">
    <citation type="journal article" date="2005" name="Nat. Genet.">
        <title>Assessing the validity of the association between the SUMO4 M55V variant and risk of type 1 diabetes.</title>
        <authorList>
            <person name="Qu H."/>
            <person name="Bharaj B."/>
            <person name="Liu X.Q."/>
            <person name="Curtis J.A."/>
            <person name="Newhook L.A."/>
            <person name="Paterson A.D."/>
            <person name="Hudson T.J."/>
            <person name="Polychronakos C."/>
        </authorList>
    </citation>
    <scope>POSSIBLE INVOLVEMENT IN T1D5</scope>
</reference>
<reference key="13">
    <citation type="journal article" date="2005" name="Nat. Genet.">
        <title>Assessing the validity of the association between the SUMO4 M55V variant and risk of type 1 diabetes.</title>
        <authorList>
            <person name="Park Y."/>
            <person name="Park S."/>
            <person name="Kang J."/>
            <person name="Yang S."/>
            <person name="Kim D."/>
        </authorList>
    </citation>
    <scope>POSSIBLE INVOLVEMENT IN T1D5</scope>
</reference>
<gene>
    <name type="primary">SUMO4</name>
    <name type="synonym">SMT3H4</name>
</gene>
<accession>Q6EEV6</accession>
<accession>A1L3W5</accession>